<reference key="1">
    <citation type="journal article" date="2006" name="Virology">
        <title>His1 and His2 are distantly related, spindle-shaped haloviruses belonging to the novel virus group, Salterprovirus.</title>
        <authorList>
            <person name="Bath C."/>
            <person name="Cukalac T."/>
            <person name="Porter K."/>
            <person name="Dyall-Smith M.L."/>
        </authorList>
    </citation>
    <scope>NUCLEOTIDE SEQUENCE [GENOMIC DNA]</scope>
</reference>
<proteinExistence type="predicted"/>
<organismHost>
    <name type="scientific">Haloarcula hispanica</name>
    <dbReference type="NCBI Taxonomy" id="51589"/>
</organismHost>
<sequence>MSPEITRETFENGPGEQTSLFHVDDCVKNHARLRKEYNLTKCPNCQRNIEKTPETADKSEQKALTDF</sequence>
<feature type="chain" id="PRO_0000384877" description="Uncharacterized protein ORF8">
    <location>
        <begin position="1"/>
        <end position="67"/>
    </location>
</feature>
<keyword id="KW-1185">Reference proteome</keyword>
<name>Y008_HIS1I</name>
<gene>
    <name type="ORF">ORF8</name>
</gene>
<organism>
    <name type="scientific">His1 virus (isolate Australia/Victoria)</name>
    <name type="common">His1V</name>
    <name type="synonym">Haloarcula hispanica virus 1</name>
    <dbReference type="NCBI Taxonomy" id="654912"/>
    <lineage>
        <taxon>Viruses</taxon>
        <taxon>Viruses incertae sedis</taxon>
        <taxon>Halspiviridae</taxon>
        <taxon>Salterprovirus</taxon>
        <taxon>Salterprovirus His1</taxon>
    </lineage>
</organism>
<accession>Q25BI7</accession>
<dbReference type="EMBL" id="AF191796">
    <property type="protein sequence ID" value="AAQ13721.1"/>
    <property type="molecule type" value="Genomic_DNA"/>
</dbReference>
<dbReference type="RefSeq" id="YP_529520.1">
    <property type="nucleotide sequence ID" value="NC_007914.1"/>
</dbReference>
<dbReference type="KEGG" id="vg:5142406"/>
<dbReference type="Proteomes" id="UP000007024">
    <property type="component" value="Segment"/>
</dbReference>
<protein>
    <recommendedName>
        <fullName>Uncharacterized protein ORF8</fullName>
    </recommendedName>
</protein>